<reference key="1">
    <citation type="journal article" date="2004" name="Nature">
        <title>DNA sequence and analysis of human chromosome 9.</title>
        <authorList>
            <person name="Humphray S.J."/>
            <person name="Oliver K."/>
            <person name="Hunt A.R."/>
            <person name="Plumb R.W."/>
            <person name="Loveland J.E."/>
            <person name="Howe K.L."/>
            <person name="Andrews T.D."/>
            <person name="Searle S."/>
            <person name="Hunt S.E."/>
            <person name="Scott C.E."/>
            <person name="Jones M.C."/>
            <person name="Ainscough R."/>
            <person name="Almeida J.P."/>
            <person name="Ambrose K.D."/>
            <person name="Ashwell R.I.S."/>
            <person name="Babbage A.K."/>
            <person name="Babbage S."/>
            <person name="Bagguley C.L."/>
            <person name="Bailey J."/>
            <person name="Banerjee R."/>
            <person name="Barker D.J."/>
            <person name="Barlow K.F."/>
            <person name="Bates K."/>
            <person name="Beasley H."/>
            <person name="Beasley O."/>
            <person name="Bird C.P."/>
            <person name="Bray-Allen S."/>
            <person name="Brown A.J."/>
            <person name="Brown J.Y."/>
            <person name="Burford D."/>
            <person name="Burrill W."/>
            <person name="Burton J."/>
            <person name="Carder C."/>
            <person name="Carter N.P."/>
            <person name="Chapman J.C."/>
            <person name="Chen Y."/>
            <person name="Clarke G."/>
            <person name="Clark S.Y."/>
            <person name="Clee C.M."/>
            <person name="Clegg S."/>
            <person name="Collier R.E."/>
            <person name="Corby N."/>
            <person name="Crosier M."/>
            <person name="Cummings A.T."/>
            <person name="Davies J."/>
            <person name="Dhami P."/>
            <person name="Dunn M."/>
            <person name="Dutta I."/>
            <person name="Dyer L.W."/>
            <person name="Earthrowl M.E."/>
            <person name="Faulkner L."/>
            <person name="Fleming C.J."/>
            <person name="Frankish A."/>
            <person name="Frankland J.A."/>
            <person name="French L."/>
            <person name="Fricker D.G."/>
            <person name="Garner P."/>
            <person name="Garnett J."/>
            <person name="Ghori J."/>
            <person name="Gilbert J.G.R."/>
            <person name="Glison C."/>
            <person name="Grafham D.V."/>
            <person name="Gribble S."/>
            <person name="Griffiths C."/>
            <person name="Griffiths-Jones S."/>
            <person name="Grocock R."/>
            <person name="Guy J."/>
            <person name="Hall R.E."/>
            <person name="Hammond S."/>
            <person name="Harley J.L."/>
            <person name="Harrison E.S.I."/>
            <person name="Hart E.A."/>
            <person name="Heath P.D."/>
            <person name="Henderson C.D."/>
            <person name="Hopkins B.L."/>
            <person name="Howard P.J."/>
            <person name="Howden P.J."/>
            <person name="Huckle E."/>
            <person name="Johnson C."/>
            <person name="Johnson D."/>
            <person name="Joy A.A."/>
            <person name="Kay M."/>
            <person name="Keenan S."/>
            <person name="Kershaw J.K."/>
            <person name="Kimberley A.M."/>
            <person name="King A."/>
            <person name="Knights A."/>
            <person name="Laird G.K."/>
            <person name="Langford C."/>
            <person name="Lawlor S."/>
            <person name="Leongamornlert D.A."/>
            <person name="Leversha M."/>
            <person name="Lloyd C."/>
            <person name="Lloyd D.M."/>
            <person name="Lovell J."/>
            <person name="Martin S."/>
            <person name="Mashreghi-Mohammadi M."/>
            <person name="Matthews L."/>
            <person name="McLaren S."/>
            <person name="McLay K.E."/>
            <person name="McMurray A."/>
            <person name="Milne S."/>
            <person name="Nickerson T."/>
            <person name="Nisbett J."/>
            <person name="Nordsiek G."/>
            <person name="Pearce A.V."/>
            <person name="Peck A.I."/>
            <person name="Porter K.M."/>
            <person name="Pandian R."/>
            <person name="Pelan S."/>
            <person name="Phillimore B."/>
            <person name="Povey S."/>
            <person name="Ramsey Y."/>
            <person name="Rand V."/>
            <person name="Scharfe M."/>
            <person name="Sehra H.K."/>
            <person name="Shownkeen R."/>
            <person name="Sims S.K."/>
            <person name="Skuce C.D."/>
            <person name="Smith M."/>
            <person name="Steward C.A."/>
            <person name="Swarbreck D."/>
            <person name="Sycamore N."/>
            <person name="Tester J."/>
            <person name="Thorpe A."/>
            <person name="Tracey A."/>
            <person name="Tromans A."/>
            <person name="Thomas D.W."/>
            <person name="Wall M."/>
            <person name="Wallis J.M."/>
            <person name="West A.P."/>
            <person name="Whitehead S.L."/>
            <person name="Willey D.L."/>
            <person name="Williams S.A."/>
            <person name="Wilming L."/>
            <person name="Wray P.W."/>
            <person name="Young L."/>
            <person name="Ashurst J.L."/>
            <person name="Coulson A."/>
            <person name="Blocker H."/>
            <person name="Durbin R.M."/>
            <person name="Sulston J.E."/>
            <person name="Hubbard T."/>
            <person name="Jackson M.J."/>
            <person name="Bentley D.R."/>
            <person name="Beck S."/>
            <person name="Rogers J."/>
            <person name="Dunham I."/>
        </authorList>
    </citation>
    <scope>NUCLEOTIDE SEQUENCE [LARGE SCALE GENOMIC DNA]</scope>
</reference>
<name>LC1L1_HUMAN</name>
<proteinExistence type="uncertain"/>
<protein>
    <recommendedName>
        <fullName>Putative lipocalin 1-like protein 1</fullName>
    </recommendedName>
    <alternativeName>
        <fullName>Lipocalin 1-like pseudogene 1</fullName>
    </alternativeName>
</protein>
<comment type="function">
    <text evidence="1">May bind a variety of ligands including lipids.</text>
</comment>
<comment type="subcellular location">
    <subcellularLocation>
        <location evidence="1">Secreted</location>
    </subcellularLocation>
</comment>
<comment type="similarity">
    <text evidence="3">Belongs to the calycin superfamily. Lipocalin family.</text>
</comment>
<comment type="caution">
    <text evidence="3">Could be the product of a pseudogene.</text>
</comment>
<keyword id="KW-1185">Reference proteome</keyword>
<keyword id="KW-0964">Secreted</keyword>
<keyword id="KW-0732">Signal</keyword>
<accession>Q5VSP4</accession>
<gene>
    <name type="primary">LCN1P1</name>
    <name type="synonym">LCN1L1</name>
</gene>
<dbReference type="EMBL" id="AL732364">
    <property type="status" value="NOT_ANNOTATED_CDS"/>
    <property type="molecule type" value="Genomic_DNA"/>
</dbReference>
<dbReference type="SMR" id="Q5VSP4"/>
<dbReference type="FunCoup" id="Q5VSP4">
    <property type="interactions" value="223"/>
</dbReference>
<dbReference type="IntAct" id="Q5VSP4">
    <property type="interactions" value="1"/>
</dbReference>
<dbReference type="SwissPalm" id="Q5VSP4"/>
<dbReference type="BioMuta" id="HGNC:23412"/>
<dbReference type="DMDM" id="74746821"/>
<dbReference type="jPOST" id="Q5VSP4"/>
<dbReference type="MassIVE" id="Q5VSP4"/>
<dbReference type="AGR" id="HGNC:23412"/>
<dbReference type="GeneCards" id="LCN1P1"/>
<dbReference type="HGNC" id="HGNC:23412">
    <property type="gene designation" value="LCN1P1"/>
</dbReference>
<dbReference type="neXtProt" id="NX_Q5VSP4"/>
<dbReference type="InParanoid" id="Q5VSP4"/>
<dbReference type="PAN-GO" id="Q5VSP4">
    <property type="GO annotations" value="1 GO annotation based on evolutionary models"/>
</dbReference>
<dbReference type="PathwayCommons" id="Q5VSP4"/>
<dbReference type="SignaLink" id="Q5VSP4"/>
<dbReference type="Pharos" id="Q5VSP4">
    <property type="development level" value="Tdark"/>
</dbReference>
<dbReference type="Proteomes" id="UP000005640">
    <property type="component" value="Unplaced"/>
</dbReference>
<dbReference type="RNAct" id="Q5VSP4">
    <property type="molecule type" value="protein"/>
</dbReference>
<dbReference type="GO" id="GO:0005615">
    <property type="term" value="C:extracellular space"/>
    <property type="evidence" value="ECO:0007005"/>
    <property type="project" value="UniProtKB"/>
</dbReference>
<dbReference type="GO" id="GO:0036094">
    <property type="term" value="F:small molecule binding"/>
    <property type="evidence" value="ECO:0007669"/>
    <property type="project" value="InterPro"/>
</dbReference>
<dbReference type="CDD" id="cd19414">
    <property type="entry name" value="lipocalin_1_3_4_13-like"/>
    <property type="match status" value="1"/>
</dbReference>
<dbReference type="FunFam" id="2.40.128.20:FF:000020">
    <property type="entry name" value="Lipocalin 1"/>
    <property type="match status" value="1"/>
</dbReference>
<dbReference type="Gene3D" id="2.40.128.20">
    <property type="match status" value="1"/>
</dbReference>
<dbReference type="InterPro" id="IPR012674">
    <property type="entry name" value="Calycin"/>
</dbReference>
<dbReference type="InterPro" id="IPR002345">
    <property type="entry name" value="Lipocalin"/>
</dbReference>
<dbReference type="InterPro" id="IPR000566">
    <property type="entry name" value="Lipocln_cytosolic_FA-bd_dom"/>
</dbReference>
<dbReference type="InterPro" id="IPR002450">
    <property type="entry name" value="von_Ebner_gland"/>
</dbReference>
<dbReference type="PANTHER" id="PTHR11430">
    <property type="entry name" value="LIPOCALIN"/>
    <property type="match status" value="1"/>
</dbReference>
<dbReference type="PANTHER" id="PTHR11430:SF124">
    <property type="entry name" value="LIPOCALIN 1-LIKE PROTEIN 1-RELATED"/>
    <property type="match status" value="1"/>
</dbReference>
<dbReference type="Pfam" id="PF00061">
    <property type="entry name" value="Lipocalin"/>
    <property type="match status" value="1"/>
</dbReference>
<dbReference type="PRINTS" id="PR01175">
    <property type="entry name" value="VNEBNERGLAND"/>
</dbReference>
<dbReference type="SUPFAM" id="SSF50814">
    <property type="entry name" value="Lipocalins"/>
    <property type="match status" value="1"/>
</dbReference>
<organism>
    <name type="scientific">Homo sapiens</name>
    <name type="common">Human</name>
    <dbReference type="NCBI Taxonomy" id="9606"/>
    <lineage>
        <taxon>Eukaryota</taxon>
        <taxon>Metazoa</taxon>
        <taxon>Chordata</taxon>
        <taxon>Craniata</taxon>
        <taxon>Vertebrata</taxon>
        <taxon>Euteleostomi</taxon>
        <taxon>Mammalia</taxon>
        <taxon>Eutheria</taxon>
        <taxon>Euarchontoglires</taxon>
        <taxon>Primates</taxon>
        <taxon>Haplorrhini</taxon>
        <taxon>Catarrhini</taxon>
        <taxon>Hominidae</taxon>
        <taxon>Homo</taxon>
    </lineage>
</organism>
<sequence>MKPLLLAISLSLIAALQAHHLLASDEEIQDVSGTWYLKAMTVDRELPEMNLESVTPMTLTILEGGNLEAKATMLISGQCQEVKVILEKTDEPGKYTANRGKHVAYIIRSHMKDHYIFYCEGRDPENNLEALEDFEKAAGARGLSTESILIPRQSETCSPGSD</sequence>
<feature type="signal peptide" evidence="2">
    <location>
        <begin position="1"/>
        <end position="18"/>
    </location>
</feature>
<feature type="chain" id="PRO_0000320565" description="Putative lipocalin 1-like protein 1">
    <location>
        <begin position="19"/>
        <end position="162"/>
    </location>
</feature>
<evidence type="ECO:0000250" key="1"/>
<evidence type="ECO:0000255" key="2"/>
<evidence type="ECO:0000305" key="3"/>